<protein>
    <recommendedName>
        <fullName evidence="1">Biotin synthase</fullName>
        <ecNumber evidence="1">2.8.1.6</ecNumber>
    </recommendedName>
</protein>
<sequence>MDAAVQVQRKKASNGAQVRNHWNVEEAKALYDLPFADLMLQAQRAHRKNFDPNHVETASLLSIKTGGCPEDCGYCSQSAHYATGLKATRLMRCADVVATAQRAKDAGATRFCMAAAWRTPKDRDLDSVCDMVNAVKGLGMETCVTLGTLTPKHAARLAEAGLDFYNHNVDTSPEFYSKIITTRSLQDRIDTLAHVRDAGIKICCGGIIGMGERVEDRLGMLVLLANLPNYPESVPINLWNKIEGVPVEDTAEPPDPIALVRLLATARVMMPRSVVRLSAGRQYMTDELQALCFLAGANSIFVGDVLLTTNNPKVDRDADLLARLGITSGLA</sequence>
<proteinExistence type="inferred from homology"/>
<evidence type="ECO:0000255" key="1">
    <source>
        <dbReference type="HAMAP-Rule" id="MF_01694"/>
    </source>
</evidence>
<evidence type="ECO:0000255" key="2">
    <source>
        <dbReference type="PROSITE-ProRule" id="PRU01266"/>
    </source>
</evidence>
<organism>
    <name type="scientific">Bradyrhizobium diazoefficiens (strain JCM 10833 / BCRC 13528 / IAM 13628 / NBRC 14792 / USDA 110)</name>
    <dbReference type="NCBI Taxonomy" id="224911"/>
    <lineage>
        <taxon>Bacteria</taxon>
        <taxon>Pseudomonadati</taxon>
        <taxon>Pseudomonadota</taxon>
        <taxon>Alphaproteobacteria</taxon>
        <taxon>Hyphomicrobiales</taxon>
        <taxon>Nitrobacteraceae</taxon>
        <taxon>Bradyrhizobium</taxon>
    </lineage>
</organism>
<comment type="function">
    <text evidence="1">Catalyzes the conversion of dethiobiotin (DTB) to biotin by the insertion of a sulfur atom into dethiobiotin via a radical-based mechanism.</text>
</comment>
<comment type="catalytic activity">
    <reaction evidence="1">
        <text>(4R,5S)-dethiobiotin + (sulfur carrier)-SH + 2 reduced [2Fe-2S]-[ferredoxin] + 2 S-adenosyl-L-methionine = (sulfur carrier)-H + biotin + 2 5'-deoxyadenosine + 2 L-methionine + 2 oxidized [2Fe-2S]-[ferredoxin]</text>
        <dbReference type="Rhea" id="RHEA:22060"/>
        <dbReference type="Rhea" id="RHEA-COMP:10000"/>
        <dbReference type="Rhea" id="RHEA-COMP:10001"/>
        <dbReference type="Rhea" id="RHEA-COMP:14737"/>
        <dbReference type="Rhea" id="RHEA-COMP:14739"/>
        <dbReference type="ChEBI" id="CHEBI:17319"/>
        <dbReference type="ChEBI" id="CHEBI:29917"/>
        <dbReference type="ChEBI" id="CHEBI:33737"/>
        <dbReference type="ChEBI" id="CHEBI:33738"/>
        <dbReference type="ChEBI" id="CHEBI:57586"/>
        <dbReference type="ChEBI" id="CHEBI:57844"/>
        <dbReference type="ChEBI" id="CHEBI:59789"/>
        <dbReference type="ChEBI" id="CHEBI:64428"/>
        <dbReference type="ChEBI" id="CHEBI:149473"/>
        <dbReference type="EC" id="2.8.1.6"/>
    </reaction>
</comment>
<comment type="cofactor">
    <cofactor evidence="1">
        <name>[4Fe-4S] cluster</name>
        <dbReference type="ChEBI" id="CHEBI:49883"/>
    </cofactor>
    <text evidence="1">Binds 1 [4Fe-4S] cluster. The cluster is coordinated with 3 cysteines and an exchangeable S-adenosyl-L-methionine.</text>
</comment>
<comment type="cofactor">
    <cofactor evidence="1">
        <name>[2Fe-2S] cluster</name>
        <dbReference type="ChEBI" id="CHEBI:190135"/>
    </cofactor>
    <text evidence="1">Binds 1 [2Fe-2S] cluster. The cluster is coordinated with 3 cysteines and 1 arginine.</text>
</comment>
<comment type="pathway">
    <text evidence="1">Cofactor biosynthesis; biotin biosynthesis; biotin from 7,8-diaminononanoate: step 2/2.</text>
</comment>
<comment type="subunit">
    <text evidence="1">Homodimer.</text>
</comment>
<comment type="similarity">
    <text evidence="1">Belongs to the radical SAM superfamily. Biotin synthase family.</text>
</comment>
<accession>Q9AMS7</accession>
<accession>Q79UC4</accession>
<dbReference type="EC" id="2.8.1.6" evidence="1"/>
<dbReference type="EMBL" id="AH010242">
    <property type="protein sequence ID" value="AAG61070.1"/>
    <property type="molecule type" value="Genomic_DNA"/>
</dbReference>
<dbReference type="EMBL" id="BA000040">
    <property type="protein sequence ID" value="BAC47360.1"/>
    <property type="molecule type" value="Genomic_DNA"/>
</dbReference>
<dbReference type="RefSeq" id="NP_768735.1">
    <property type="nucleotide sequence ID" value="NC_004463.1"/>
</dbReference>
<dbReference type="RefSeq" id="WP_011084890.1">
    <property type="nucleotide sequence ID" value="NZ_CP011360.1"/>
</dbReference>
<dbReference type="SMR" id="Q9AMS7"/>
<dbReference type="FunCoup" id="Q9AMS7">
    <property type="interactions" value="462"/>
</dbReference>
<dbReference type="STRING" id="224911.AAV28_07305"/>
<dbReference type="EnsemblBacteria" id="BAC47360">
    <property type="protein sequence ID" value="BAC47360"/>
    <property type="gene ID" value="BAC47360"/>
</dbReference>
<dbReference type="GeneID" id="93213428"/>
<dbReference type="KEGG" id="bja:blr2095"/>
<dbReference type="PATRIC" id="fig|224911.44.peg.1604"/>
<dbReference type="eggNOG" id="COG0502">
    <property type="taxonomic scope" value="Bacteria"/>
</dbReference>
<dbReference type="HOGENOM" id="CLU_033172_1_2_5"/>
<dbReference type="InParanoid" id="Q9AMS7"/>
<dbReference type="OrthoDB" id="9786826at2"/>
<dbReference type="PhylomeDB" id="Q9AMS7"/>
<dbReference type="UniPathway" id="UPA00078">
    <property type="reaction ID" value="UER00162"/>
</dbReference>
<dbReference type="Proteomes" id="UP000002526">
    <property type="component" value="Chromosome"/>
</dbReference>
<dbReference type="GO" id="GO:0051537">
    <property type="term" value="F:2 iron, 2 sulfur cluster binding"/>
    <property type="evidence" value="ECO:0000318"/>
    <property type="project" value="GO_Central"/>
</dbReference>
<dbReference type="GO" id="GO:0051539">
    <property type="term" value="F:4 iron, 4 sulfur cluster binding"/>
    <property type="evidence" value="ECO:0007669"/>
    <property type="project" value="UniProtKB-KW"/>
</dbReference>
<dbReference type="GO" id="GO:0004076">
    <property type="term" value="F:biotin synthase activity"/>
    <property type="evidence" value="ECO:0000318"/>
    <property type="project" value="GO_Central"/>
</dbReference>
<dbReference type="GO" id="GO:0005506">
    <property type="term" value="F:iron ion binding"/>
    <property type="evidence" value="ECO:0007669"/>
    <property type="project" value="UniProtKB-UniRule"/>
</dbReference>
<dbReference type="GO" id="GO:0009102">
    <property type="term" value="P:biotin biosynthetic process"/>
    <property type="evidence" value="ECO:0000318"/>
    <property type="project" value="GO_Central"/>
</dbReference>
<dbReference type="CDD" id="cd01335">
    <property type="entry name" value="Radical_SAM"/>
    <property type="match status" value="1"/>
</dbReference>
<dbReference type="FunFam" id="3.20.20.70:FF:000026">
    <property type="entry name" value="Biotin synthase"/>
    <property type="match status" value="1"/>
</dbReference>
<dbReference type="Gene3D" id="3.20.20.70">
    <property type="entry name" value="Aldolase class I"/>
    <property type="match status" value="1"/>
</dbReference>
<dbReference type="HAMAP" id="MF_01694">
    <property type="entry name" value="BioB"/>
    <property type="match status" value="1"/>
</dbReference>
<dbReference type="InterPro" id="IPR013785">
    <property type="entry name" value="Aldolase_TIM"/>
</dbReference>
<dbReference type="InterPro" id="IPR010722">
    <property type="entry name" value="BATS_dom"/>
</dbReference>
<dbReference type="InterPro" id="IPR002684">
    <property type="entry name" value="Biotin_synth/BioAB"/>
</dbReference>
<dbReference type="InterPro" id="IPR024177">
    <property type="entry name" value="Biotin_synthase"/>
</dbReference>
<dbReference type="InterPro" id="IPR006638">
    <property type="entry name" value="Elp3/MiaA/NifB-like_rSAM"/>
</dbReference>
<dbReference type="InterPro" id="IPR007197">
    <property type="entry name" value="rSAM"/>
</dbReference>
<dbReference type="NCBIfam" id="TIGR00433">
    <property type="entry name" value="bioB"/>
    <property type="match status" value="1"/>
</dbReference>
<dbReference type="PANTHER" id="PTHR22976">
    <property type="entry name" value="BIOTIN SYNTHASE"/>
    <property type="match status" value="1"/>
</dbReference>
<dbReference type="PANTHER" id="PTHR22976:SF2">
    <property type="entry name" value="BIOTIN SYNTHASE, MITOCHONDRIAL"/>
    <property type="match status" value="1"/>
</dbReference>
<dbReference type="Pfam" id="PF06968">
    <property type="entry name" value="BATS"/>
    <property type="match status" value="1"/>
</dbReference>
<dbReference type="Pfam" id="PF04055">
    <property type="entry name" value="Radical_SAM"/>
    <property type="match status" value="1"/>
</dbReference>
<dbReference type="PIRSF" id="PIRSF001619">
    <property type="entry name" value="Biotin_synth"/>
    <property type="match status" value="1"/>
</dbReference>
<dbReference type="SFLD" id="SFLDF00272">
    <property type="entry name" value="biotin_synthase"/>
    <property type="match status" value="1"/>
</dbReference>
<dbReference type="SFLD" id="SFLDG01278">
    <property type="entry name" value="biotin_synthase_like"/>
    <property type="match status" value="1"/>
</dbReference>
<dbReference type="SMART" id="SM00876">
    <property type="entry name" value="BATS"/>
    <property type="match status" value="1"/>
</dbReference>
<dbReference type="SMART" id="SM00729">
    <property type="entry name" value="Elp3"/>
    <property type="match status" value="1"/>
</dbReference>
<dbReference type="SUPFAM" id="SSF102114">
    <property type="entry name" value="Radical SAM enzymes"/>
    <property type="match status" value="1"/>
</dbReference>
<dbReference type="PROSITE" id="PS51918">
    <property type="entry name" value="RADICAL_SAM"/>
    <property type="match status" value="1"/>
</dbReference>
<feature type="chain" id="PRO_0000381244" description="Biotin synthase">
    <location>
        <begin position="1"/>
        <end position="331"/>
    </location>
</feature>
<feature type="domain" description="Radical SAM core" evidence="2">
    <location>
        <begin position="53"/>
        <end position="272"/>
    </location>
</feature>
<feature type="binding site" evidence="1">
    <location>
        <position position="68"/>
    </location>
    <ligand>
        <name>[4Fe-4S] cluster</name>
        <dbReference type="ChEBI" id="CHEBI:49883"/>
        <note>4Fe-4S-S-AdoMet</note>
    </ligand>
</feature>
<feature type="binding site" evidence="1">
    <location>
        <position position="72"/>
    </location>
    <ligand>
        <name>[4Fe-4S] cluster</name>
        <dbReference type="ChEBI" id="CHEBI:49883"/>
        <note>4Fe-4S-S-AdoMet</note>
    </ligand>
</feature>
<feature type="binding site" evidence="1">
    <location>
        <position position="75"/>
    </location>
    <ligand>
        <name>[4Fe-4S] cluster</name>
        <dbReference type="ChEBI" id="CHEBI:49883"/>
        <note>4Fe-4S-S-AdoMet</note>
    </ligand>
</feature>
<feature type="binding site" evidence="1">
    <location>
        <position position="112"/>
    </location>
    <ligand>
        <name>[2Fe-2S] cluster</name>
        <dbReference type="ChEBI" id="CHEBI:190135"/>
    </ligand>
</feature>
<feature type="binding site" evidence="1">
    <location>
        <position position="143"/>
    </location>
    <ligand>
        <name>[2Fe-2S] cluster</name>
        <dbReference type="ChEBI" id="CHEBI:190135"/>
    </ligand>
</feature>
<feature type="binding site" evidence="1">
    <location>
        <position position="203"/>
    </location>
    <ligand>
        <name>[2Fe-2S] cluster</name>
        <dbReference type="ChEBI" id="CHEBI:190135"/>
    </ligand>
</feature>
<feature type="binding site" evidence="1">
    <location>
        <position position="276"/>
    </location>
    <ligand>
        <name>[2Fe-2S] cluster</name>
        <dbReference type="ChEBI" id="CHEBI:190135"/>
    </ligand>
</feature>
<name>BIOB_BRADU</name>
<gene>
    <name evidence="1" type="primary">bioB</name>
    <name type="ordered locus">blr2095</name>
    <name type="ORF">id897</name>
</gene>
<reference key="1">
    <citation type="journal article" date="2001" name="J. Bacteriol.">
        <title>Potential symbiosis-specific genes uncovered by sequencing a 410-kb DNA region of the Bradyrhizobium japonicum chromosome.</title>
        <authorList>
            <person name="Goettfert M."/>
            <person name="Roethlisberger S."/>
            <person name="Kuendig C."/>
            <person name="Beck C."/>
            <person name="Marty R."/>
            <person name="Hennecke H."/>
        </authorList>
    </citation>
    <scope>NUCLEOTIDE SEQUENCE [GENOMIC DNA]</scope>
    <source>
        <strain>USDA 110spc4</strain>
    </source>
</reference>
<reference key="2">
    <citation type="journal article" date="2002" name="DNA Res.">
        <title>Complete genomic sequence of nitrogen-fixing symbiotic bacterium Bradyrhizobium japonicum USDA110.</title>
        <authorList>
            <person name="Kaneko T."/>
            <person name="Nakamura Y."/>
            <person name="Sato S."/>
            <person name="Minamisawa K."/>
            <person name="Uchiumi T."/>
            <person name="Sasamoto S."/>
            <person name="Watanabe A."/>
            <person name="Idesawa K."/>
            <person name="Iriguchi M."/>
            <person name="Kawashima K."/>
            <person name="Kohara M."/>
            <person name="Matsumoto M."/>
            <person name="Shimpo S."/>
            <person name="Tsuruoka H."/>
            <person name="Wada T."/>
            <person name="Yamada M."/>
            <person name="Tabata S."/>
        </authorList>
    </citation>
    <scope>NUCLEOTIDE SEQUENCE [LARGE SCALE GENOMIC DNA]</scope>
    <source>
        <strain>JCM 10833 / BCRC 13528 / IAM 13628 / NBRC 14792 / USDA 110</strain>
    </source>
</reference>
<keyword id="KW-0001">2Fe-2S</keyword>
<keyword id="KW-0004">4Fe-4S</keyword>
<keyword id="KW-0093">Biotin biosynthesis</keyword>
<keyword id="KW-0408">Iron</keyword>
<keyword id="KW-0411">Iron-sulfur</keyword>
<keyword id="KW-0479">Metal-binding</keyword>
<keyword id="KW-1185">Reference proteome</keyword>
<keyword id="KW-0949">S-adenosyl-L-methionine</keyword>
<keyword id="KW-0808">Transferase</keyword>